<evidence type="ECO:0000255" key="1">
    <source>
        <dbReference type="HAMAP-Rule" id="MF_00577"/>
    </source>
</evidence>
<accession>A3DAF4</accession>
<reference key="1">
    <citation type="submission" date="2007-02" db="EMBL/GenBank/DDBJ databases">
        <title>Complete sequence of chromosome of Shewanella baltica OS155.</title>
        <authorList>
            <consortium name="US DOE Joint Genome Institute"/>
            <person name="Copeland A."/>
            <person name="Lucas S."/>
            <person name="Lapidus A."/>
            <person name="Barry K."/>
            <person name="Detter J.C."/>
            <person name="Glavina del Rio T."/>
            <person name="Hammon N."/>
            <person name="Israni S."/>
            <person name="Dalin E."/>
            <person name="Tice H."/>
            <person name="Pitluck S."/>
            <person name="Sims D.R."/>
            <person name="Brettin T."/>
            <person name="Bruce D."/>
            <person name="Han C."/>
            <person name="Tapia R."/>
            <person name="Brainard J."/>
            <person name="Schmutz J."/>
            <person name="Larimer F."/>
            <person name="Land M."/>
            <person name="Hauser L."/>
            <person name="Kyrpides N."/>
            <person name="Mikhailova N."/>
            <person name="Brettar I."/>
            <person name="Klappenbach J."/>
            <person name="Konstantinidis K."/>
            <person name="Rodrigues J."/>
            <person name="Tiedje J."/>
            <person name="Richardson P."/>
        </authorList>
    </citation>
    <scope>NUCLEOTIDE SEQUENCE [LARGE SCALE GENOMIC DNA]</scope>
    <source>
        <strain>OS155 / ATCC BAA-1091</strain>
    </source>
</reference>
<protein>
    <recommendedName>
        <fullName evidence="1">Urocanate hydratase</fullName>
        <shortName evidence="1">Urocanase</shortName>
        <ecNumber evidence="1">4.2.1.49</ecNumber>
    </recommendedName>
    <alternativeName>
        <fullName evidence="1">Imidazolonepropionate hydrolase</fullName>
    </alternativeName>
</protein>
<keyword id="KW-0963">Cytoplasm</keyword>
<keyword id="KW-0369">Histidine metabolism</keyword>
<keyword id="KW-0456">Lyase</keyword>
<keyword id="KW-0520">NAD</keyword>
<keyword id="KW-1185">Reference proteome</keyword>
<comment type="function">
    <text evidence="1">Catalyzes the conversion of urocanate to 4-imidazolone-5-propionate.</text>
</comment>
<comment type="catalytic activity">
    <reaction evidence="1">
        <text>4-imidazolone-5-propanoate = trans-urocanate + H2O</text>
        <dbReference type="Rhea" id="RHEA:13101"/>
        <dbReference type="ChEBI" id="CHEBI:15377"/>
        <dbReference type="ChEBI" id="CHEBI:17771"/>
        <dbReference type="ChEBI" id="CHEBI:77893"/>
        <dbReference type="EC" id="4.2.1.49"/>
    </reaction>
</comment>
<comment type="cofactor">
    <cofactor evidence="1">
        <name>NAD(+)</name>
        <dbReference type="ChEBI" id="CHEBI:57540"/>
    </cofactor>
    <text evidence="1">Binds 1 NAD(+) per subunit.</text>
</comment>
<comment type="pathway">
    <text evidence="1">Amino-acid degradation; L-histidine degradation into L-glutamate; N-formimidoyl-L-glutamate from L-histidine: step 2/3.</text>
</comment>
<comment type="subcellular location">
    <subcellularLocation>
        <location evidence="1">Cytoplasm</location>
    </subcellularLocation>
</comment>
<comment type="similarity">
    <text evidence="1">Belongs to the urocanase family.</text>
</comment>
<sequence length="555" mass="60353">MDKRHDPSRRIIAPHGTQLSCKSWLTEAPMRMLMNNLHPDVAERPEDLVVYGGIGRAARDWDCYDKIIEVLQRLEDDETLLVQSGKPVGVFRTHADAPRVLIANSNLVPHWANWEHFNELDKLGLAMYGQMTAGSWIYIGTQGIVQGTYETFVSVAKQHFEGISKGKWILTGGLGGMGGAQTLAGTMAGFSVLACEVDETRIDFRLRTRYVDKKATSLDEALAMIEEANQAGKPVSVGLLANAADVFAELVKRGVTPDVVTDQTSAHDPLNGYLPQGWTMAEAAAMRKTDEAGVVKAAKASMAVQVQAMLDLQTAGAATLDYGNNIRQMAFEMGVENAFDFPGFVPAYIRPLFCEGIGPFRWVALSGDPEDIYKTDAKVKELIPDNPHLHNWLDMARERIAFQGLPARICWVGLKDRARLALAFNEMVKKGELSAPVVIGRDHLDSGSVASPNRETESMLDGSDAVSDWPLLNALLNTASGATWVSLHHGGGVGMGFSQHSGVVIVCDGTDAAAKRVGRVLWNDPATGVMRHADAGYEIAKNCAKEQGLDLPMQE</sequence>
<dbReference type="EC" id="4.2.1.49" evidence="1"/>
<dbReference type="EMBL" id="CP000563">
    <property type="protein sequence ID" value="ABN63717.1"/>
    <property type="molecule type" value="Genomic_DNA"/>
</dbReference>
<dbReference type="RefSeq" id="WP_011848211.1">
    <property type="nucleotide sequence ID" value="NC_009052.1"/>
</dbReference>
<dbReference type="SMR" id="A3DAF4"/>
<dbReference type="STRING" id="325240.Sbal_4252"/>
<dbReference type="KEGG" id="sbl:Sbal_4252"/>
<dbReference type="HOGENOM" id="CLU_018868_0_1_6"/>
<dbReference type="OrthoDB" id="9764874at2"/>
<dbReference type="UniPathway" id="UPA00379">
    <property type="reaction ID" value="UER00550"/>
</dbReference>
<dbReference type="Proteomes" id="UP000001557">
    <property type="component" value="Chromosome"/>
</dbReference>
<dbReference type="GO" id="GO:0005737">
    <property type="term" value="C:cytoplasm"/>
    <property type="evidence" value="ECO:0007669"/>
    <property type="project" value="UniProtKB-SubCell"/>
</dbReference>
<dbReference type="GO" id="GO:0016153">
    <property type="term" value="F:urocanate hydratase activity"/>
    <property type="evidence" value="ECO:0007669"/>
    <property type="project" value="UniProtKB-UniRule"/>
</dbReference>
<dbReference type="GO" id="GO:0019556">
    <property type="term" value="P:L-histidine catabolic process to glutamate and formamide"/>
    <property type="evidence" value="ECO:0007669"/>
    <property type="project" value="UniProtKB-UniPathway"/>
</dbReference>
<dbReference type="GO" id="GO:0019557">
    <property type="term" value="P:L-histidine catabolic process to glutamate and formate"/>
    <property type="evidence" value="ECO:0007669"/>
    <property type="project" value="UniProtKB-UniPathway"/>
</dbReference>
<dbReference type="FunFam" id="3.40.50.10730:FF:000001">
    <property type="entry name" value="Urocanate hydratase"/>
    <property type="match status" value="1"/>
</dbReference>
<dbReference type="Gene3D" id="3.40.50.10730">
    <property type="entry name" value="Urocanase like domains"/>
    <property type="match status" value="1"/>
</dbReference>
<dbReference type="Gene3D" id="3.40.1770.10">
    <property type="entry name" value="Urocanase superfamily"/>
    <property type="match status" value="1"/>
</dbReference>
<dbReference type="HAMAP" id="MF_00577">
    <property type="entry name" value="HutU"/>
    <property type="match status" value="1"/>
</dbReference>
<dbReference type="InterPro" id="IPR055351">
    <property type="entry name" value="Urocanase"/>
</dbReference>
<dbReference type="InterPro" id="IPR023637">
    <property type="entry name" value="Urocanase-like"/>
</dbReference>
<dbReference type="InterPro" id="IPR035401">
    <property type="entry name" value="Urocanase_C"/>
</dbReference>
<dbReference type="InterPro" id="IPR038364">
    <property type="entry name" value="Urocanase_central_sf"/>
</dbReference>
<dbReference type="InterPro" id="IPR023636">
    <property type="entry name" value="Urocanase_CS"/>
</dbReference>
<dbReference type="InterPro" id="IPR035400">
    <property type="entry name" value="Urocanase_N"/>
</dbReference>
<dbReference type="InterPro" id="IPR035085">
    <property type="entry name" value="Urocanase_Rossmann-like"/>
</dbReference>
<dbReference type="InterPro" id="IPR036190">
    <property type="entry name" value="Urocanase_sf"/>
</dbReference>
<dbReference type="NCBIfam" id="TIGR01228">
    <property type="entry name" value="hutU"/>
    <property type="match status" value="1"/>
</dbReference>
<dbReference type="NCBIfam" id="NF003820">
    <property type="entry name" value="PRK05414.1"/>
    <property type="match status" value="1"/>
</dbReference>
<dbReference type="PANTHER" id="PTHR12216">
    <property type="entry name" value="UROCANATE HYDRATASE"/>
    <property type="match status" value="1"/>
</dbReference>
<dbReference type="PANTHER" id="PTHR12216:SF4">
    <property type="entry name" value="UROCANATE HYDRATASE"/>
    <property type="match status" value="1"/>
</dbReference>
<dbReference type="Pfam" id="PF01175">
    <property type="entry name" value="Urocanase"/>
    <property type="match status" value="1"/>
</dbReference>
<dbReference type="Pfam" id="PF17392">
    <property type="entry name" value="Urocanase_C"/>
    <property type="match status" value="1"/>
</dbReference>
<dbReference type="Pfam" id="PF17391">
    <property type="entry name" value="Urocanase_N"/>
    <property type="match status" value="1"/>
</dbReference>
<dbReference type="PIRSF" id="PIRSF001423">
    <property type="entry name" value="Urocanate_hydrat"/>
    <property type="match status" value="1"/>
</dbReference>
<dbReference type="SUPFAM" id="SSF111326">
    <property type="entry name" value="Urocanase"/>
    <property type="match status" value="1"/>
</dbReference>
<dbReference type="PROSITE" id="PS01233">
    <property type="entry name" value="UROCANASE"/>
    <property type="match status" value="1"/>
</dbReference>
<name>HUTU_SHEB5</name>
<feature type="chain" id="PRO_1000025148" description="Urocanate hydratase">
    <location>
        <begin position="1"/>
        <end position="555"/>
    </location>
</feature>
<feature type="active site" evidence="1">
    <location>
        <position position="410"/>
    </location>
</feature>
<feature type="binding site" evidence="1">
    <location>
        <begin position="52"/>
        <end position="53"/>
    </location>
    <ligand>
        <name>NAD(+)</name>
        <dbReference type="ChEBI" id="CHEBI:57540"/>
    </ligand>
</feature>
<feature type="binding site" evidence="1">
    <location>
        <position position="130"/>
    </location>
    <ligand>
        <name>NAD(+)</name>
        <dbReference type="ChEBI" id="CHEBI:57540"/>
    </ligand>
</feature>
<feature type="binding site" evidence="1">
    <location>
        <begin position="176"/>
        <end position="178"/>
    </location>
    <ligand>
        <name>NAD(+)</name>
        <dbReference type="ChEBI" id="CHEBI:57540"/>
    </ligand>
</feature>
<feature type="binding site" evidence="1">
    <location>
        <position position="196"/>
    </location>
    <ligand>
        <name>NAD(+)</name>
        <dbReference type="ChEBI" id="CHEBI:57540"/>
    </ligand>
</feature>
<feature type="binding site" evidence="1">
    <location>
        <position position="201"/>
    </location>
    <ligand>
        <name>NAD(+)</name>
        <dbReference type="ChEBI" id="CHEBI:57540"/>
    </ligand>
</feature>
<feature type="binding site" evidence="1">
    <location>
        <begin position="242"/>
        <end position="243"/>
    </location>
    <ligand>
        <name>NAD(+)</name>
        <dbReference type="ChEBI" id="CHEBI:57540"/>
    </ligand>
</feature>
<feature type="binding site" evidence="1">
    <location>
        <begin position="263"/>
        <end position="267"/>
    </location>
    <ligand>
        <name>NAD(+)</name>
        <dbReference type="ChEBI" id="CHEBI:57540"/>
    </ligand>
</feature>
<feature type="binding site" evidence="1">
    <location>
        <begin position="273"/>
        <end position="274"/>
    </location>
    <ligand>
        <name>NAD(+)</name>
        <dbReference type="ChEBI" id="CHEBI:57540"/>
    </ligand>
</feature>
<feature type="binding site" evidence="1">
    <location>
        <position position="322"/>
    </location>
    <ligand>
        <name>NAD(+)</name>
        <dbReference type="ChEBI" id="CHEBI:57540"/>
    </ligand>
</feature>
<feature type="binding site" evidence="1">
    <location>
        <position position="492"/>
    </location>
    <ligand>
        <name>NAD(+)</name>
        <dbReference type="ChEBI" id="CHEBI:57540"/>
    </ligand>
</feature>
<proteinExistence type="inferred from homology"/>
<gene>
    <name evidence="1" type="primary">hutU</name>
    <name type="ordered locus">Sbal_4252</name>
</gene>
<organism>
    <name type="scientific">Shewanella baltica (strain OS155 / ATCC BAA-1091)</name>
    <dbReference type="NCBI Taxonomy" id="325240"/>
    <lineage>
        <taxon>Bacteria</taxon>
        <taxon>Pseudomonadati</taxon>
        <taxon>Pseudomonadota</taxon>
        <taxon>Gammaproteobacteria</taxon>
        <taxon>Alteromonadales</taxon>
        <taxon>Shewanellaceae</taxon>
        <taxon>Shewanella</taxon>
    </lineage>
</organism>